<keyword id="KW-0963">Cytoplasm</keyword>
<keyword id="KW-0342">GTP-binding</keyword>
<keyword id="KW-0547">Nucleotide-binding</keyword>
<keyword id="KW-0648">Protein biosynthesis</keyword>
<dbReference type="EMBL" id="AP007281">
    <property type="protein sequence ID" value="BAG25788.1"/>
    <property type="molecule type" value="Genomic_DNA"/>
</dbReference>
<dbReference type="RefSeq" id="WP_003668625.1">
    <property type="nucleotide sequence ID" value="NC_010609.1"/>
</dbReference>
<dbReference type="SMR" id="B2G8K6"/>
<dbReference type="KEGG" id="lrf:LAR_1272"/>
<dbReference type="HOGENOM" id="CLU_002794_2_1_9"/>
<dbReference type="GO" id="GO:0005829">
    <property type="term" value="C:cytosol"/>
    <property type="evidence" value="ECO:0007669"/>
    <property type="project" value="TreeGrafter"/>
</dbReference>
<dbReference type="GO" id="GO:0005525">
    <property type="term" value="F:GTP binding"/>
    <property type="evidence" value="ECO:0007669"/>
    <property type="project" value="UniProtKB-UniRule"/>
</dbReference>
<dbReference type="GO" id="GO:0003924">
    <property type="term" value="F:GTPase activity"/>
    <property type="evidence" value="ECO:0007669"/>
    <property type="project" value="InterPro"/>
</dbReference>
<dbReference type="GO" id="GO:0016150">
    <property type="term" value="F:translation release factor activity, codon nonspecific"/>
    <property type="evidence" value="ECO:0007669"/>
    <property type="project" value="TreeGrafter"/>
</dbReference>
<dbReference type="GO" id="GO:0016149">
    <property type="term" value="F:translation release factor activity, codon specific"/>
    <property type="evidence" value="ECO:0007669"/>
    <property type="project" value="UniProtKB-UniRule"/>
</dbReference>
<dbReference type="GO" id="GO:0006449">
    <property type="term" value="P:regulation of translational termination"/>
    <property type="evidence" value="ECO:0007669"/>
    <property type="project" value="UniProtKB-UniRule"/>
</dbReference>
<dbReference type="CDD" id="cd04169">
    <property type="entry name" value="RF3"/>
    <property type="match status" value="1"/>
</dbReference>
<dbReference type="CDD" id="cd03689">
    <property type="entry name" value="RF3_II"/>
    <property type="match status" value="1"/>
</dbReference>
<dbReference type="CDD" id="cd16259">
    <property type="entry name" value="RF3_III"/>
    <property type="match status" value="1"/>
</dbReference>
<dbReference type="FunFam" id="2.40.30.10:FF:000040">
    <property type="entry name" value="Peptide chain release factor 3"/>
    <property type="match status" value="1"/>
</dbReference>
<dbReference type="FunFam" id="3.30.70.3280:FF:000001">
    <property type="entry name" value="Peptide chain release factor 3"/>
    <property type="match status" value="1"/>
</dbReference>
<dbReference type="FunFam" id="3.40.50.300:FF:000542">
    <property type="entry name" value="Peptide chain release factor 3"/>
    <property type="match status" value="1"/>
</dbReference>
<dbReference type="Gene3D" id="3.40.50.300">
    <property type="entry name" value="P-loop containing nucleotide triphosphate hydrolases"/>
    <property type="match status" value="1"/>
</dbReference>
<dbReference type="Gene3D" id="3.30.70.3280">
    <property type="entry name" value="Peptide chain release factor 3, domain III"/>
    <property type="match status" value="1"/>
</dbReference>
<dbReference type="Gene3D" id="2.40.30.10">
    <property type="entry name" value="Translation factors"/>
    <property type="match status" value="1"/>
</dbReference>
<dbReference type="HAMAP" id="MF_00072">
    <property type="entry name" value="Rel_fac_3"/>
    <property type="match status" value="1"/>
</dbReference>
<dbReference type="InterPro" id="IPR053905">
    <property type="entry name" value="EF-G-like_DII"/>
</dbReference>
<dbReference type="InterPro" id="IPR035647">
    <property type="entry name" value="EFG_III/V"/>
</dbReference>
<dbReference type="InterPro" id="IPR031157">
    <property type="entry name" value="G_TR_CS"/>
</dbReference>
<dbReference type="InterPro" id="IPR027417">
    <property type="entry name" value="P-loop_NTPase"/>
</dbReference>
<dbReference type="InterPro" id="IPR004548">
    <property type="entry name" value="PrfC"/>
</dbReference>
<dbReference type="InterPro" id="IPR032090">
    <property type="entry name" value="RF3_C"/>
</dbReference>
<dbReference type="InterPro" id="IPR038467">
    <property type="entry name" value="RF3_dom_3_sf"/>
</dbReference>
<dbReference type="InterPro" id="IPR041732">
    <property type="entry name" value="RF3_GTP-bd"/>
</dbReference>
<dbReference type="InterPro" id="IPR005225">
    <property type="entry name" value="Small_GTP-bd"/>
</dbReference>
<dbReference type="InterPro" id="IPR000795">
    <property type="entry name" value="T_Tr_GTP-bd_dom"/>
</dbReference>
<dbReference type="InterPro" id="IPR009000">
    <property type="entry name" value="Transl_B-barrel_sf"/>
</dbReference>
<dbReference type="NCBIfam" id="TIGR00503">
    <property type="entry name" value="prfC"/>
    <property type="match status" value="1"/>
</dbReference>
<dbReference type="NCBIfam" id="NF001964">
    <property type="entry name" value="PRK00741.1"/>
    <property type="match status" value="1"/>
</dbReference>
<dbReference type="NCBIfam" id="TIGR00231">
    <property type="entry name" value="small_GTP"/>
    <property type="match status" value="1"/>
</dbReference>
<dbReference type="PANTHER" id="PTHR43556">
    <property type="entry name" value="PEPTIDE CHAIN RELEASE FACTOR RF3"/>
    <property type="match status" value="1"/>
</dbReference>
<dbReference type="PANTHER" id="PTHR43556:SF2">
    <property type="entry name" value="PEPTIDE CHAIN RELEASE FACTOR RF3"/>
    <property type="match status" value="1"/>
</dbReference>
<dbReference type="Pfam" id="PF22042">
    <property type="entry name" value="EF-G_D2"/>
    <property type="match status" value="1"/>
</dbReference>
<dbReference type="Pfam" id="PF00009">
    <property type="entry name" value="GTP_EFTU"/>
    <property type="match status" value="1"/>
</dbReference>
<dbReference type="Pfam" id="PF16658">
    <property type="entry name" value="RF3_C"/>
    <property type="match status" value="1"/>
</dbReference>
<dbReference type="PRINTS" id="PR00315">
    <property type="entry name" value="ELONGATNFCT"/>
</dbReference>
<dbReference type="SUPFAM" id="SSF54980">
    <property type="entry name" value="EF-G C-terminal domain-like"/>
    <property type="match status" value="1"/>
</dbReference>
<dbReference type="SUPFAM" id="SSF52540">
    <property type="entry name" value="P-loop containing nucleoside triphosphate hydrolases"/>
    <property type="match status" value="1"/>
</dbReference>
<dbReference type="SUPFAM" id="SSF50447">
    <property type="entry name" value="Translation proteins"/>
    <property type="match status" value="1"/>
</dbReference>
<dbReference type="PROSITE" id="PS00301">
    <property type="entry name" value="G_TR_1"/>
    <property type="match status" value="1"/>
</dbReference>
<dbReference type="PROSITE" id="PS51722">
    <property type="entry name" value="G_TR_2"/>
    <property type="match status" value="1"/>
</dbReference>
<protein>
    <recommendedName>
        <fullName evidence="1">Peptide chain release factor 3</fullName>
        <shortName evidence="1">RF-3</shortName>
    </recommendedName>
</protein>
<evidence type="ECO:0000255" key="1">
    <source>
        <dbReference type="HAMAP-Rule" id="MF_00072"/>
    </source>
</evidence>
<organism>
    <name type="scientific">Limosilactobacillus reuteri subsp. reuteri (strain JCM 1112)</name>
    <name type="common">Lactobacillus reuteri</name>
    <dbReference type="NCBI Taxonomy" id="557433"/>
    <lineage>
        <taxon>Bacteria</taxon>
        <taxon>Bacillati</taxon>
        <taxon>Bacillota</taxon>
        <taxon>Bacilli</taxon>
        <taxon>Lactobacillales</taxon>
        <taxon>Lactobacillaceae</taxon>
        <taxon>Limosilactobacillus</taxon>
    </lineage>
</organism>
<accession>B2G8K6</accession>
<sequence length="525" mass="59477">MSPKELAEAVNKRRTFAIISHPDAGKTTITEQLLLFGGVVREAGTVKARKTGNFAKSDWMEIEKKRGISVTSSVMQFDFQGKRINILDTPGHEDFSEDTYRTLMAVDSAVMVIDSAKGIEPQTKKLFQICKMRGIPIFTFMNKFDRDAREPLDLLNEVEDVLGIETYPINWPIGSGHQFKGIYDRFNHRVALTHPADENNPYLPLDEDGNVEGDNPLAGDGEWQDAMDGMELVEVAGNELDQEKIAKGDQTPVFFGSALTNFGVQTFLETYLQFAPAPSDHKTEDGDVVKPLDPEFSGFVFKIQANMNPRHRDRIAFVRICSGEFDRGMDVTLSRTKKPMRLSNVTEFMADTRENVETAVAGDIIGLYDTGNFQIGDSIYNGKKDIQFEKLPQFTPELFVRVSAKNVMKQKSFHKGINQLVQEGAVQLYRSYSTGDYILGAVGQLQFEVFKFRMQNEYNSEVVMEPMGTKTARWIDPDQLDEKMSSSRNILVKDIHDQPLFLFENQFAENWFKQKYPDVKLTAKL</sequence>
<proteinExistence type="inferred from homology"/>
<feature type="chain" id="PRO_1000092488" description="Peptide chain release factor 3">
    <location>
        <begin position="1"/>
        <end position="525"/>
    </location>
</feature>
<feature type="domain" description="tr-type G">
    <location>
        <begin position="11"/>
        <end position="279"/>
    </location>
</feature>
<feature type="binding site" evidence="1">
    <location>
        <begin position="20"/>
        <end position="27"/>
    </location>
    <ligand>
        <name>GTP</name>
        <dbReference type="ChEBI" id="CHEBI:37565"/>
    </ligand>
</feature>
<feature type="binding site" evidence="1">
    <location>
        <begin position="88"/>
        <end position="92"/>
    </location>
    <ligand>
        <name>GTP</name>
        <dbReference type="ChEBI" id="CHEBI:37565"/>
    </ligand>
</feature>
<feature type="binding site" evidence="1">
    <location>
        <begin position="142"/>
        <end position="145"/>
    </location>
    <ligand>
        <name>GTP</name>
        <dbReference type="ChEBI" id="CHEBI:37565"/>
    </ligand>
</feature>
<reference key="1">
    <citation type="journal article" date="2008" name="DNA Res.">
        <title>Comparative genome analysis of Lactobacillus reuteri and Lactobacillus fermentum reveal a genomic island for reuterin and cobalamin production.</title>
        <authorList>
            <person name="Morita H."/>
            <person name="Toh H."/>
            <person name="Fukuda S."/>
            <person name="Horikawa H."/>
            <person name="Oshima K."/>
            <person name="Suzuki T."/>
            <person name="Murakami M."/>
            <person name="Hisamatsu S."/>
            <person name="Kato Y."/>
            <person name="Takizawa T."/>
            <person name="Fukuoka H."/>
            <person name="Yoshimura T."/>
            <person name="Itoh K."/>
            <person name="O'Sullivan D.J."/>
            <person name="McKay L.L."/>
            <person name="Ohno H."/>
            <person name="Kikuchi J."/>
            <person name="Masaoka T."/>
            <person name="Hattori M."/>
        </authorList>
    </citation>
    <scope>NUCLEOTIDE SEQUENCE [LARGE SCALE GENOMIC DNA]</scope>
    <source>
        <strain>JCM 1112</strain>
    </source>
</reference>
<name>RF3_LIMRJ</name>
<comment type="function">
    <text evidence="1">Increases the formation of ribosomal termination complexes and stimulates activities of RF-1 and RF-2. It binds guanine nucleotides and has strong preference for UGA stop codons. It may interact directly with the ribosome. The stimulation of RF-1 and RF-2 is significantly reduced by GTP and GDP, but not by GMP.</text>
</comment>
<comment type="subcellular location">
    <subcellularLocation>
        <location evidence="1">Cytoplasm</location>
    </subcellularLocation>
</comment>
<comment type="similarity">
    <text evidence="1">Belongs to the TRAFAC class translation factor GTPase superfamily. Classic translation factor GTPase family. PrfC subfamily.</text>
</comment>
<gene>
    <name evidence="1" type="primary">prfC</name>
    <name type="ordered locus">LAR_1272</name>
</gene>